<reference key="1">
    <citation type="journal article" date="2005" name="Nature">
        <title>Genomic sequence of the pathogenic and allergenic filamentous fungus Aspergillus fumigatus.</title>
        <authorList>
            <person name="Nierman W.C."/>
            <person name="Pain A."/>
            <person name="Anderson M.J."/>
            <person name="Wortman J.R."/>
            <person name="Kim H.S."/>
            <person name="Arroyo J."/>
            <person name="Berriman M."/>
            <person name="Abe K."/>
            <person name="Archer D.B."/>
            <person name="Bermejo C."/>
            <person name="Bennett J.W."/>
            <person name="Bowyer P."/>
            <person name="Chen D."/>
            <person name="Collins M."/>
            <person name="Coulsen R."/>
            <person name="Davies R."/>
            <person name="Dyer P.S."/>
            <person name="Farman M.L."/>
            <person name="Fedorova N."/>
            <person name="Fedorova N.D."/>
            <person name="Feldblyum T.V."/>
            <person name="Fischer R."/>
            <person name="Fosker N."/>
            <person name="Fraser A."/>
            <person name="Garcia J.L."/>
            <person name="Garcia M.J."/>
            <person name="Goble A."/>
            <person name="Goldman G.H."/>
            <person name="Gomi K."/>
            <person name="Griffith-Jones S."/>
            <person name="Gwilliam R."/>
            <person name="Haas B.J."/>
            <person name="Haas H."/>
            <person name="Harris D.E."/>
            <person name="Horiuchi H."/>
            <person name="Huang J."/>
            <person name="Humphray S."/>
            <person name="Jimenez J."/>
            <person name="Keller N."/>
            <person name="Khouri H."/>
            <person name="Kitamoto K."/>
            <person name="Kobayashi T."/>
            <person name="Konzack S."/>
            <person name="Kulkarni R."/>
            <person name="Kumagai T."/>
            <person name="Lafton A."/>
            <person name="Latge J.-P."/>
            <person name="Li W."/>
            <person name="Lord A."/>
            <person name="Lu C."/>
            <person name="Majoros W.H."/>
            <person name="May G.S."/>
            <person name="Miller B.L."/>
            <person name="Mohamoud Y."/>
            <person name="Molina M."/>
            <person name="Monod M."/>
            <person name="Mouyna I."/>
            <person name="Mulligan S."/>
            <person name="Murphy L.D."/>
            <person name="O'Neil S."/>
            <person name="Paulsen I."/>
            <person name="Penalva M.A."/>
            <person name="Pertea M."/>
            <person name="Price C."/>
            <person name="Pritchard B.L."/>
            <person name="Quail M.A."/>
            <person name="Rabbinowitsch E."/>
            <person name="Rawlins N."/>
            <person name="Rajandream M.A."/>
            <person name="Reichard U."/>
            <person name="Renauld H."/>
            <person name="Robson G.D."/>
            <person name="Rodriguez de Cordoba S."/>
            <person name="Rodriguez-Pena J.M."/>
            <person name="Ronning C.M."/>
            <person name="Rutter S."/>
            <person name="Salzberg S.L."/>
            <person name="Sanchez M."/>
            <person name="Sanchez-Ferrero J.C."/>
            <person name="Saunders D."/>
            <person name="Seeger K."/>
            <person name="Squares R."/>
            <person name="Squares S."/>
            <person name="Takeuchi M."/>
            <person name="Tekaia F."/>
            <person name="Turner G."/>
            <person name="Vazquez de Aldana C.R."/>
            <person name="Weidman J."/>
            <person name="White O."/>
            <person name="Woodward J.R."/>
            <person name="Yu J.-H."/>
            <person name="Fraser C.M."/>
            <person name="Galagan J.E."/>
            <person name="Asai K."/>
            <person name="Machida M."/>
            <person name="Hall N."/>
            <person name="Barrell B.G."/>
            <person name="Denning D.W."/>
        </authorList>
    </citation>
    <scope>NUCLEOTIDE SEQUENCE [LARGE SCALE GENOMIC DNA]</scope>
    <source>
        <strain>ATCC MYA-4609 / CBS 101355 / FGSC A1100 / Af293</strain>
    </source>
</reference>
<reference key="2">
    <citation type="journal article" date="2004" name="J. Exp. Med.">
        <title>Siderophore biosynthesis but not reductive iron assimilation is essential for Aspergillus fumigatus virulence.</title>
        <authorList>
            <person name="Schrettl M."/>
            <person name="Bignell E."/>
            <person name="Kragl C."/>
            <person name="Joechl C."/>
            <person name="Rogers T."/>
            <person name="Arst H.N. Jr."/>
            <person name="Haynes K."/>
            <person name="Haas H."/>
        </authorList>
    </citation>
    <scope>FUNCTION</scope>
    <scope>DISRUPTION PHENOTYPE</scope>
    <scope>INDUCTION</scope>
</reference>
<reference key="3">
    <citation type="journal article" date="2008" name="Mol. Microbiol.">
        <title>SreA-mediated iron regulation in Aspergillus fumigatus.</title>
        <authorList>
            <person name="Schrettl M."/>
            <person name="Kim H.S."/>
            <person name="Eisendle M."/>
            <person name="Kragl C."/>
            <person name="Nierman W.C."/>
            <person name="Heinekamp T."/>
            <person name="Werner E.R."/>
            <person name="Jacobsen I."/>
            <person name="Illmer P."/>
            <person name="Yi H."/>
            <person name="Brakhage A.A."/>
            <person name="Haas H."/>
        </authorList>
    </citation>
    <scope>INDUCTION</scope>
</reference>
<reference key="4">
    <citation type="journal article" date="2010" name="Mol. Microbiol.">
        <title>Aspergillus fumigatus AcuM regulates both iron acquisition and gluconeogenesis.</title>
        <authorList>
            <person name="Liu H."/>
            <person name="Gravelat F.N."/>
            <person name="Chiang L.Y."/>
            <person name="Chen D."/>
            <person name="Vanier G."/>
            <person name="Ejzykowicz D.E."/>
            <person name="Ibrahim A.S."/>
            <person name="Nierman W.C."/>
            <person name="Sheppard D.C."/>
            <person name="Filler S.G."/>
        </authorList>
    </citation>
    <scope>INDUCTION</scope>
</reference>
<keyword id="KW-1003">Cell membrane</keyword>
<keyword id="KW-0406">Ion transport</keyword>
<keyword id="KW-0408">Iron</keyword>
<keyword id="KW-0410">Iron transport</keyword>
<keyword id="KW-0472">Membrane</keyword>
<keyword id="KW-1185">Reference proteome</keyword>
<keyword id="KW-0812">Transmembrane</keyword>
<keyword id="KW-1133">Transmembrane helix</keyword>
<keyword id="KW-0813">Transport</keyword>
<name>FTRA_ASPFU</name>
<evidence type="ECO:0000255" key="1"/>
<evidence type="ECO:0000256" key="2">
    <source>
        <dbReference type="SAM" id="MobiDB-lite"/>
    </source>
</evidence>
<evidence type="ECO:0000269" key="3">
    <source>
    </source>
</evidence>
<evidence type="ECO:0000269" key="4">
    <source>
    </source>
</evidence>
<evidence type="ECO:0000269" key="5">
    <source>
    </source>
</evidence>
<evidence type="ECO:0000303" key="6">
    <source>
    </source>
</evidence>
<evidence type="ECO:0000305" key="7"/>
<sequence length="370" mass="40476">MAKDVFAVPIFFICFRECVETSIIVSVLLSFIKQTLGQEQDATTRKRLIRQVWWGVAIGLFISVCIGAGMIGAFYGYGKDHFASTEDLWEGIFSLIASVIITIMGAALLRVTKLQEKWRVKLAQALEAKPLTGGTFKNNLKLWAEKYAMFLLPFITVLREGLEAVVFIGGVSLSFPATAFPLPVFTGILAGVAIGYLLYRGGNQASLQIFLIISTCILYLVAAGLFSRGVWYLENNTWNHVIGGDAAETGAGPGSYDIRQSVWHVNCCSPLVNGGGGWGIFNAILGWTNSATYGSVLSYNLYWIAVIVWFVAMRHKERHGRLPVVDPLLNRLRGRKSAEPGNGEQDVEVSTIPSDLQTESKIPKSGASLV</sequence>
<feature type="chain" id="PRO_0000444441" description="High affinity iron permease ftrA">
    <location>
        <begin position="1"/>
        <end position="370"/>
    </location>
</feature>
<feature type="transmembrane region" description="Helical" evidence="1">
    <location>
        <begin position="5"/>
        <end position="25"/>
    </location>
</feature>
<feature type="transmembrane region" description="Helical" evidence="1">
    <location>
        <begin position="52"/>
        <end position="72"/>
    </location>
</feature>
<feature type="transmembrane region" description="Helical" evidence="1">
    <location>
        <begin position="88"/>
        <end position="108"/>
    </location>
</feature>
<feature type="transmembrane region" description="Helical" evidence="1">
    <location>
        <begin position="148"/>
        <end position="168"/>
    </location>
</feature>
<feature type="transmembrane region" description="Helical" evidence="1">
    <location>
        <begin position="179"/>
        <end position="199"/>
    </location>
</feature>
<feature type="transmembrane region" description="Helical" evidence="1">
    <location>
        <begin position="206"/>
        <end position="226"/>
    </location>
</feature>
<feature type="transmembrane region" description="Helical" evidence="1">
    <location>
        <begin position="293"/>
        <end position="313"/>
    </location>
</feature>
<feature type="region of interest" description="Disordered" evidence="2">
    <location>
        <begin position="335"/>
        <end position="370"/>
    </location>
</feature>
<feature type="compositionally biased region" description="Polar residues" evidence="2">
    <location>
        <begin position="351"/>
        <end position="360"/>
    </location>
</feature>
<organism>
    <name type="scientific">Aspergillus fumigatus (strain ATCC MYA-4609 / CBS 101355 / FGSC A1100 / Af293)</name>
    <name type="common">Neosartorya fumigata</name>
    <dbReference type="NCBI Taxonomy" id="330879"/>
    <lineage>
        <taxon>Eukaryota</taxon>
        <taxon>Fungi</taxon>
        <taxon>Dikarya</taxon>
        <taxon>Ascomycota</taxon>
        <taxon>Pezizomycotina</taxon>
        <taxon>Eurotiomycetes</taxon>
        <taxon>Eurotiomycetidae</taxon>
        <taxon>Eurotiales</taxon>
        <taxon>Aspergillaceae</taxon>
        <taxon>Aspergillus</taxon>
        <taxon>Aspergillus subgen. Fumigati</taxon>
    </lineage>
</organism>
<protein>
    <recommendedName>
        <fullName evidence="6">High affinity iron permease ftrA</fullName>
    </recommendedName>
</protein>
<comment type="function">
    <text evidence="3">High affinity iron permease; part of the reductive iron assimilatory system (RIA), a siderophore-independent high affinity iron uptake mechanism (PubMed:15504822).</text>
</comment>
<comment type="subcellular location">
    <subcellularLocation>
        <location evidence="7">Cell membrane</location>
        <topology evidence="1">Multi-pass membrane protein</topology>
    </subcellularLocation>
</comment>
<comment type="induction">
    <text evidence="3 4 5">Expression is up-regulated during iron starvation and is controlled by the GATA-type transcription factor sreA and the Zinc cluster transcription factor acuM (PubMed:15504822, PubMed:18721228, PubMed:21062375).</text>
</comment>
<comment type="disruption phenotype">
    <text evidence="3">Does not affect the virulence in a murine model of invasive aspergillosis (PubMed:15504822). Displays an 8-fold increase in external siderophore triacetylfusarinine C (TAFC) production after 12h of growth in iron-depleted conditions (PubMed:15504822).</text>
</comment>
<comment type="similarity">
    <text evidence="7">Belongs to the oxidase-dependent Fe transporter (OFeT) (TC 9.A.10.1) family.</text>
</comment>
<proteinExistence type="evidence at transcript level"/>
<gene>
    <name evidence="6" type="primary">ftrA</name>
    <name type="ORF">AFUA_5G03800</name>
</gene>
<dbReference type="EMBL" id="AAHF01000011">
    <property type="protein sequence ID" value="EAL85926.2"/>
    <property type="molecule type" value="Genomic_DNA"/>
</dbReference>
<dbReference type="RefSeq" id="XP_747964.2">
    <property type="nucleotide sequence ID" value="XM_742871.2"/>
</dbReference>
<dbReference type="SMR" id="E9QT42"/>
<dbReference type="FunCoup" id="E9QT42">
    <property type="interactions" value="54"/>
</dbReference>
<dbReference type="STRING" id="330879.E9QT42"/>
<dbReference type="EnsemblFungi" id="EAL85926">
    <property type="protein sequence ID" value="EAL85926"/>
    <property type="gene ID" value="AFUA_5G03800"/>
</dbReference>
<dbReference type="GeneID" id="3505587"/>
<dbReference type="KEGG" id="afm:AFUA_5G03800"/>
<dbReference type="VEuPathDB" id="FungiDB:Afu5g03800"/>
<dbReference type="eggNOG" id="ENOG502QQWE">
    <property type="taxonomic scope" value="Eukaryota"/>
</dbReference>
<dbReference type="HOGENOM" id="CLU_046738_0_1_1"/>
<dbReference type="InParanoid" id="E9QT42"/>
<dbReference type="OMA" id="NEWNKIV"/>
<dbReference type="OrthoDB" id="4364at2759"/>
<dbReference type="Proteomes" id="UP000002530">
    <property type="component" value="Chromosome 5"/>
</dbReference>
<dbReference type="GO" id="GO:0033573">
    <property type="term" value="C:high-affinity iron permease complex"/>
    <property type="evidence" value="ECO:0000318"/>
    <property type="project" value="GO_Central"/>
</dbReference>
<dbReference type="GO" id="GO:0005886">
    <property type="term" value="C:plasma membrane"/>
    <property type="evidence" value="ECO:0000318"/>
    <property type="project" value="GO_Central"/>
</dbReference>
<dbReference type="GO" id="GO:0015093">
    <property type="term" value="F:ferrous iron transmembrane transporter activity"/>
    <property type="evidence" value="ECO:0000318"/>
    <property type="project" value="GO_Central"/>
</dbReference>
<dbReference type="GO" id="GO:0061840">
    <property type="term" value="F:high-affinity ferrous iron transmembrane transporter activity"/>
    <property type="evidence" value="ECO:0007669"/>
    <property type="project" value="EnsemblFungi"/>
</dbReference>
<dbReference type="GO" id="GO:0010106">
    <property type="term" value="P:cellular response to iron ion starvation"/>
    <property type="evidence" value="ECO:0000270"/>
    <property type="project" value="AspGD"/>
</dbReference>
<dbReference type="GO" id="GO:0034755">
    <property type="term" value="P:iron ion transmembrane transport"/>
    <property type="evidence" value="ECO:0000318"/>
    <property type="project" value="GO_Central"/>
</dbReference>
<dbReference type="GO" id="GO:0033215">
    <property type="term" value="P:reductive iron assimilation"/>
    <property type="evidence" value="ECO:0007669"/>
    <property type="project" value="EnsemblFungi"/>
</dbReference>
<dbReference type="InterPro" id="IPR004923">
    <property type="entry name" value="FTR1/Fip1/EfeU"/>
</dbReference>
<dbReference type="PANTHER" id="PTHR31632">
    <property type="entry name" value="IRON TRANSPORTER FTH1"/>
    <property type="match status" value="1"/>
</dbReference>
<dbReference type="PANTHER" id="PTHR31632:SF2">
    <property type="entry name" value="PLASMA MEMBRANE IRON PERMEASE"/>
    <property type="match status" value="1"/>
</dbReference>
<dbReference type="Pfam" id="PF03239">
    <property type="entry name" value="FTR1"/>
    <property type="match status" value="1"/>
</dbReference>
<accession>E9QT42</accession>